<sequence length="244" mass="26578">MPRPSLCADSGGGMMTTLTARPEAITFDPQQSAQIVVDMQNAYATPGGYLDLAGFDVSTTRPVIANIQTAVTAARAAGMLIIWFQNGWDEQYVEAGGPGSPNFHKSNALKTMRKQPQLQGKLLAKGSWDYQLVDELVPQPGDIVLPKPRYSGFFNTPLDSILRSRGIRHLVFTGIATNVCVESTLRDGFFLEHFGVVLEDATHQAGPEFAQKAALFNIETFFGWVSDVETFCDALSPTSFARIA</sequence>
<keyword id="KW-0378">Hydrolase</keyword>
<organism>
    <name type="scientific">Shigella flexneri serotype X (strain 2002017)</name>
    <dbReference type="NCBI Taxonomy" id="591020"/>
    <lineage>
        <taxon>Bacteria</taxon>
        <taxon>Pseudomonadati</taxon>
        <taxon>Pseudomonadota</taxon>
        <taxon>Gammaproteobacteria</taxon>
        <taxon>Enterobacterales</taxon>
        <taxon>Enterobacteriaceae</taxon>
        <taxon>Shigella</taxon>
    </lineage>
</organism>
<evidence type="ECO:0000255" key="1">
    <source>
        <dbReference type="HAMAP-Rule" id="MF_00830"/>
    </source>
</evidence>
<comment type="function">
    <text evidence="1">Hydrolyzes ureidoacrylate to form aminoacrylate and carbamate. The carbamate hydrolyzes spontaneously, thereby releasing one of the nitrogen atoms of the pyrimidine ring as ammonia and one of its carbon atoms as CO2.</text>
</comment>
<comment type="catalytic activity">
    <reaction evidence="1">
        <text>(Z)-3-ureidoacrylate + H2O + H(+) = (Z)-3-aminoacrylate + NH4(+) + CO2</text>
        <dbReference type="Rhea" id="RHEA:42624"/>
        <dbReference type="ChEBI" id="CHEBI:15377"/>
        <dbReference type="ChEBI" id="CHEBI:15378"/>
        <dbReference type="ChEBI" id="CHEBI:16526"/>
        <dbReference type="ChEBI" id="CHEBI:28938"/>
        <dbReference type="ChEBI" id="CHEBI:59891"/>
        <dbReference type="ChEBI" id="CHEBI:59894"/>
        <dbReference type="EC" id="3.5.1.110"/>
    </reaction>
</comment>
<comment type="catalytic activity">
    <reaction evidence="1">
        <text>(Z)-3-ureidoacrylate + H2O = (Z)-3-aminoacrylate + carbamate + H(+)</text>
        <dbReference type="Rhea" id="RHEA:31603"/>
        <dbReference type="ChEBI" id="CHEBI:13941"/>
        <dbReference type="ChEBI" id="CHEBI:15377"/>
        <dbReference type="ChEBI" id="CHEBI:15378"/>
        <dbReference type="ChEBI" id="CHEBI:59891"/>
        <dbReference type="ChEBI" id="CHEBI:59894"/>
    </reaction>
</comment>
<comment type="catalytic activity">
    <reaction evidence="1">
        <text>(Z)-2-methylureidoacrylate + H2O + H(+) = (Z)-2-methylaminoacrylate + NH4(+) + CO2</text>
        <dbReference type="Rhea" id="RHEA:42620"/>
        <dbReference type="ChEBI" id="CHEBI:15377"/>
        <dbReference type="ChEBI" id="CHEBI:15378"/>
        <dbReference type="ChEBI" id="CHEBI:16526"/>
        <dbReference type="ChEBI" id="CHEBI:28938"/>
        <dbReference type="ChEBI" id="CHEBI:143783"/>
        <dbReference type="ChEBI" id="CHEBI:145735"/>
        <dbReference type="EC" id="3.5.1.110"/>
    </reaction>
</comment>
<comment type="induction">
    <text evidence="1">Up-regulated by the nitrogen regulatory protein C (NtrC also called GlnG) and repressed by RutR.</text>
</comment>
<comment type="similarity">
    <text evidence="1">Belongs to the isochorismatase family. RutB subfamily.</text>
</comment>
<feature type="chain" id="PRO_0000402704" description="Ureidoacrylate amidohydrolase RutB">
    <location>
        <begin position="1"/>
        <end position="244"/>
    </location>
</feature>
<feature type="active site" description="Proton acceptor" evidence="1">
    <location>
        <position position="38"/>
    </location>
</feature>
<feature type="active site" evidence="1">
    <location>
        <position position="147"/>
    </location>
</feature>
<feature type="active site" description="Nucleophile" evidence="1">
    <location>
        <position position="180"/>
    </location>
</feature>
<reference key="1">
    <citation type="journal article" date="2010" name="J. Clin. Microbiol.">
        <title>Emergence of a new multidrug-resistant serotype X variant in an epidemic clone of Shigella flexneri.</title>
        <authorList>
            <person name="Ye C."/>
            <person name="Lan R."/>
            <person name="Xia S."/>
            <person name="Zhang J."/>
            <person name="Sun Q."/>
            <person name="Zhang S."/>
            <person name="Jing H."/>
            <person name="Wang L."/>
            <person name="Li Z."/>
            <person name="Zhou Z."/>
            <person name="Zhao A."/>
            <person name="Cui Z."/>
            <person name="Cao J."/>
            <person name="Jin D."/>
            <person name="Huang L."/>
            <person name="Wang Y."/>
            <person name="Luo X."/>
            <person name="Bai X."/>
            <person name="Wang Y."/>
            <person name="Wang P."/>
            <person name="Xu Q."/>
            <person name="Xu J."/>
        </authorList>
    </citation>
    <scope>NUCLEOTIDE SEQUENCE [LARGE SCALE GENOMIC DNA]</scope>
    <source>
        <strain>2002017</strain>
    </source>
</reference>
<proteinExistence type="inferred from homology"/>
<protein>
    <recommendedName>
        <fullName evidence="1">Ureidoacrylate amidohydrolase RutB</fullName>
        <ecNumber evidence="1">3.5.1.110</ecNumber>
    </recommendedName>
</protein>
<accession>D2AC42</accession>
<dbReference type="EC" id="3.5.1.110" evidence="1"/>
<dbReference type="EMBL" id="CP001383">
    <property type="protein sequence ID" value="ADA73360.1"/>
    <property type="molecule type" value="Genomic_DNA"/>
</dbReference>
<dbReference type="SMR" id="D2AC42"/>
<dbReference type="KEGG" id="sfe:SFxv_1100"/>
<dbReference type="PATRIC" id="fig|591020.3.peg.1174"/>
<dbReference type="HOGENOM" id="CLU_068979_8_0_6"/>
<dbReference type="GO" id="GO:0016811">
    <property type="term" value="F:hydrolase activity, acting on carbon-nitrogen (but not peptide) bonds, in linear amides"/>
    <property type="evidence" value="ECO:0007669"/>
    <property type="project" value="UniProtKB-UniRule"/>
</dbReference>
<dbReference type="GO" id="GO:0019740">
    <property type="term" value="P:nitrogen utilization"/>
    <property type="evidence" value="ECO:0007669"/>
    <property type="project" value="UniProtKB-UniRule"/>
</dbReference>
<dbReference type="GO" id="GO:0006212">
    <property type="term" value="P:uracil catabolic process"/>
    <property type="evidence" value="ECO:0007669"/>
    <property type="project" value="UniProtKB-UniRule"/>
</dbReference>
<dbReference type="CDD" id="cd00431">
    <property type="entry name" value="cysteine_hydrolases"/>
    <property type="match status" value="1"/>
</dbReference>
<dbReference type="FunFam" id="3.40.50.850:FF:000004">
    <property type="entry name" value="Peroxyureidoacrylate/ureidoacrylate amidohydrolase RutB"/>
    <property type="match status" value="1"/>
</dbReference>
<dbReference type="Gene3D" id="3.40.50.850">
    <property type="entry name" value="Isochorismatase-like"/>
    <property type="match status" value="1"/>
</dbReference>
<dbReference type="HAMAP" id="MF_00830">
    <property type="entry name" value="RutB"/>
    <property type="match status" value="1"/>
</dbReference>
<dbReference type="InterPro" id="IPR000868">
    <property type="entry name" value="Isochorismatase-like_dom"/>
</dbReference>
<dbReference type="InterPro" id="IPR050272">
    <property type="entry name" value="Isochorismatase-like_hydrls"/>
</dbReference>
<dbReference type="InterPro" id="IPR036380">
    <property type="entry name" value="Isochorismatase-like_sf"/>
</dbReference>
<dbReference type="InterPro" id="IPR019916">
    <property type="entry name" value="RutB"/>
</dbReference>
<dbReference type="NCBIfam" id="TIGR03614">
    <property type="entry name" value="RutB"/>
    <property type="match status" value="1"/>
</dbReference>
<dbReference type="PANTHER" id="PTHR43540:SF6">
    <property type="entry name" value="ISOCHORISMATASE-LIKE DOMAIN-CONTAINING PROTEIN"/>
    <property type="match status" value="1"/>
</dbReference>
<dbReference type="PANTHER" id="PTHR43540">
    <property type="entry name" value="PEROXYUREIDOACRYLATE/UREIDOACRYLATE AMIDOHYDROLASE-RELATED"/>
    <property type="match status" value="1"/>
</dbReference>
<dbReference type="Pfam" id="PF00857">
    <property type="entry name" value="Isochorismatase"/>
    <property type="match status" value="1"/>
</dbReference>
<dbReference type="SUPFAM" id="SSF52499">
    <property type="entry name" value="Isochorismatase-like hydrolases"/>
    <property type="match status" value="1"/>
</dbReference>
<gene>
    <name evidence="1" type="primary">rutB</name>
    <name type="ordered locus">SFxv_1100</name>
</gene>
<name>RUTB_SHIF2</name>